<organism>
    <name type="scientific">Drosophila melanogaster</name>
    <name type="common">Fruit fly</name>
    <dbReference type="NCBI Taxonomy" id="7227"/>
    <lineage>
        <taxon>Eukaryota</taxon>
        <taxon>Metazoa</taxon>
        <taxon>Ecdysozoa</taxon>
        <taxon>Arthropoda</taxon>
        <taxon>Hexapoda</taxon>
        <taxon>Insecta</taxon>
        <taxon>Pterygota</taxon>
        <taxon>Neoptera</taxon>
        <taxon>Endopterygota</taxon>
        <taxon>Diptera</taxon>
        <taxon>Brachycera</taxon>
        <taxon>Muscomorpha</taxon>
        <taxon>Ephydroidea</taxon>
        <taxon>Drosophilidae</taxon>
        <taxon>Drosophila</taxon>
        <taxon>Sophophora</taxon>
    </lineage>
</organism>
<dbReference type="EMBL" id="AE014134">
    <property type="protein sequence ID" value="AAF52576.1"/>
    <property type="molecule type" value="Genomic_DNA"/>
</dbReference>
<dbReference type="EMBL" id="BT003597">
    <property type="protein sequence ID" value="AAO39600.1"/>
    <property type="molecule type" value="mRNA"/>
</dbReference>
<dbReference type="RefSeq" id="NP_609162.1">
    <property type="nucleotide sequence ID" value="NM_135318.2"/>
</dbReference>
<dbReference type="SMR" id="Q9VLV5"/>
<dbReference type="BioGRID" id="60215">
    <property type="interactions" value="15"/>
</dbReference>
<dbReference type="ComplexPortal" id="CPX-2559">
    <property type="entry name" value="U7 small nuclear ribonucleoprotein complex"/>
</dbReference>
<dbReference type="DIP" id="DIP-18284N"/>
<dbReference type="FunCoup" id="Q9VLV5">
    <property type="interactions" value="2008"/>
</dbReference>
<dbReference type="IntAct" id="Q9VLV5">
    <property type="interactions" value="45"/>
</dbReference>
<dbReference type="STRING" id="7227.FBpp0079182"/>
<dbReference type="PaxDb" id="7227-FBpp0079182"/>
<dbReference type="DNASU" id="34080"/>
<dbReference type="EnsemblMetazoa" id="FBtr0079560">
    <property type="protein sequence ID" value="FBpp0079182"/>
    <property type="gene ID" value="FBgn0261790"/>
</dbReference>
<dbReference type="GeneID" id="34080"/>
<dbReference type="KEGG" id="dme:Dmel_CG18591"/>
<dbReference type="UCSC" id="CG18591-RA">
    <property type="organism name" value="d. melanogaster"/>
</dbReference>
<dbReference type="AGR" id="FB:FBgn0261790"/>
<dbReference type="CTD" id="34080"/>
<dbReference type="FlyBase" id="FBgn0261790">
    <property type="gene designation" value="SmE"/>
</dbReference>
<dbReference type="VEuPathDB" id="VectorBase:FBgn0261790"/>
<dbReference type="eggNOG" id="KOG1774">
    <property type="taxonomic scope" value="Eukaryota"/>
</dbReference>
<dbReference type="GeneTree" id="ENSGT00390000012818"/>
<dbReference type="HOGENOM" id="CLU_125186_1_0_1"/>
<dbReference type="InParanoid" id="Q9VLV5"/>
<dbReference type="OMA" id="VPPINCI"/>
<dbReference type="OrthoDB" id="25620at2759"/>
<dbReference type="PhylomeDB" id="Q9VLV5"/>
<dbReference type="Reactome" id="R-DME-111367">
    <property type="pathway name" value="SLBP independent Processing of Histone Pre-mRNAs"/>
</dbReference>
<dbReference type="Reactome" id="R-DME-72163">
    <property type="pathway name" value="mRNA Splicing - Major Pathway"/>
</dbReference>
<dbReference type="Reactome" id="R-DME-72165">
    <property type="pathway name" value="mRNA Splicing - Minor Pathway"/>
</dbReference>
<dbReference type="Reactome" id="R-DME-73856">
    <property type="pathway name" value="RNA Polymerase II Transcription Termination"/>
</dbReference>
<dbReference type="Reactome" id="R-DME-77588">
    <property type="pathway name" value="SLBP Dependent Processing of Replication-Dependent Histone Pre-mRNAs"/>
</dbReference>
<dbReference type="BioGRID-ORCS" id="34080">
    <property type="hits" value="1 hit in 1 CRISPR screen"/>
</dbReference>
<dbReference type="GenomeRNAi" id="34080"/>
<dbReference type="PRO" id="PR:Q9VLV5"/>
<dbReference type="Proteomes" id="UP000000803">
    <property type="component" value="Chromosome 2L"/>
</dbReference>
<dbReference type="Bgee" id="FBgn0261790">
    <property type="expression patterns" value="Expressed in secondary oocyte and 148 other cell types or tissues"/>
</dbReference>
<dbReference type="ExpressionAtlas" id="Q9VLV5">
    <property type="expression patterns" value="baseline and differential"/>
</dbReference>
<dbReference type="GO" id="GO:0071013">
    <property type="term" value="C:catalytic step 2 spliceosome"/>
    <property type="evidence" value="ECO:0007005"/>
    <property type="project" value="FlyBase"/>
</dbReference>
<dbReference type="GO" id="GO:0005829">
    <property type="term" value="C:cytosol"/>
    <property type="evidence" value="ECO:0007669"/>
    <property type="project" value="UniProtKB-SubCell"/>
</dbReference>
<dbReference type="GO" id="GO:0005634">
    <property type="term" value="C:nucleus"/>
    <property type="evidence" value="ECO:0000314"/>
    <property type="project" value="FlyBase"/>
</dbReference>
<dbReference type="GO" id="GO:0034715">
    <property type="term" value="C:pICln-Sm protein complex"/>
    <property type="evidence" value="ECO:0000318"/>
    <property type="project" value="GO_Central"/>
</dbReference>
<dbReference type="GO" id="GO:0071011">
    <property type="term" value="C:precatalytic spliceosome"/>
    <property type="evidence" value="ECO:0007005"/>
    <property type="project" value="FlyBase"/>
</dbReference>
<dbReference type="GO" id="GO:0030532">
    <property type="term" value="C:small nuclear ribonucleoprotein complex"/>
    <property type="evidence" value="ECO:0000314"/>
    <property type="project" value="FlyBase"/>
</dbReference>
<dbReference type="GO" id="GO:0005681">
    <property type="term" value="C:spliceosomal complex"/>
    <property type="evidence" value="ECO:0000250"/>
    <property type="project" value="FlyBase"/>
</dbReference>
<dbReference type="GO" id="GO:0005685">
    <property type="term" value="C:U1 snRNP"/>
    <property type="evidence" value="ECO:0000318"/>
    <property type="project" value="GO_Central"/>
</dbReference>
<dbReference type="GO" id="GO:0005686">
    <property type="term" value="C:U2 snRNP"/>
    <property type="evidence" value="ECO:0000318"/>
    <property type="project" value="GO_Central"/>
</dbReference>
<dbReference type="GO" id="GO:0005687">
    <property type="term" value="C:U4 snRNP"/>
    <property type="evidence" value="ECO:0000318"/>
    <property type="project" value="GO_Central"/>
</dbReference>
<dbReference type="GO" id="GO:0046540">
    <property type="term" value="C:U4/U6 x U5 tri-snRNP complex"/>
    <property type="evidence" value="ECO:0000318"/>
    <property type="project" value="GO_Central"/>
</dbReference>
<dbReference type="GO" id="GO:0005682">
    <property type="term" value="C:U5 snRNP"/>
    <property type="evidence" value="ECO:0000318"/>
    <property type="project" value="GO_Central"/>
</dbReference>
<dbReference type="GO" id="GO:0003723">
    <property type="term" value="F:RNA binding"/>
    <property type="evidence" value="ECO:0007669"/>
    <property type="project" value="UniProtKB-KW"/>
</dbReference>
<dbReference type="GO" id="GO:0000398">
    <property type="term" value="P:mRNA splicing, via spliceosome"/>
    <property type="evidence" value="ECO:0000250"/>
    <property type="project" value="FlyBase"/>
</dbReference>
<dbReference type="GO" id="GO:0000387">
    <property type="term" value="P:spliceosomal snRNP assembly"/>
    <property type="evidence" value="ECO:0000318"/>
    <property type="project" value="GO_Central"/>
</dbReference>
<dbReference type="CDD" id="cd01718">
    <property type="entry name" value="Sm_E"/>
    <property type="match status" value="1"/>
</dbReference>
<dbReference type="FunFam" id="2.30.30.100:FF:000013">
    <property type="entry name" value="Small nuclear ribonucleoprotein E"/>
    <property type="match status" value="1"/>
</dbReference>
<dbReference type="Gene3D" id="2.30.30.100">
    <property type="match status" value="1"/>
</dbReference>
<dbReference type="InterPro" id="IPR010920">
    <property type="entry name" value="LSM_dom_sf"/>
</dbReference>
<dbReference type="InterPro" id="IPR047575">
    <property type="entry name" value="Sm"/>
</dbReference>
<dbReference type="InterPro" id="IPR001163">
    <property type="entry name" value="Sm_dom_euk/arc"/>
</dbReference>
<dbReference type="InterPro" id="IPR027078">
    <property type="entry name" value="snRNP-E"/>
</dbReference>
<dbReference type="PANTHER" id="PTHR11193">
    <property type="entry name" value="SMALL NUCLEAR RIBONUCLEOPROTEIN E"/>
    <property type="match status" value="1"/>
</dbReference>
<dbReference type="Pfam" id="PF01423">
    <property type="entry name" value="LSM"/>
    <property type="match status" value="1"/>
</dbReference>
<dbReference type="SMART" id="SM00651">
    <property type="entry name" value="Sm"/>
    <property type="match status" value="1"/>
</dbReference>
<dbReference type="SUPFAM" id="SSF50182">
    <property type="entry name" value="Sm-like ribonucleoproteins"/>
    <property type="match status" value="1"/>
</dbReference>
<dbReference type="PROSITE" id="PS52002">
    <property type="entry name" value="SM"/>
    <property type="match status" value="1"/>
</dbReference>
<evidence type="ECO:0000250" key="1">
    <source>
        <dbReference type="UniProtKB" id="P62304"/>
    </source>
</evidence>
<evidence type="ECO:0000255" key="2">
    <source>
        <dbReference type="PROSITE-ProRule" id="PRU01346"/>
    </source>
</evidence>
<evidence type="ECO:0000269" key="3">
    <source>
    </source>
</evidence>
<evidence type="ECO:0000305" key="4"/>
<comment type="function">
    <text evidence="1">Plays a role in pre-mRNA splicing as a core component of the spliceosomal U1, U2, U4 and U5 small nuclear ribonucleoproteins (snRNPs), the building blocks of the spliceosome.</text>
</comment>
<comment type="subunit">
    <text evidence="1 3">Core component of the spliceosomal U1, U2, U4 and U5 small nuclear ribonucleoproteins (snRNPs), the building blocks of the spliceosome (By similarity). Interacts with the SMN complex (PubMed:18621711).</text>
</comment>
<comment type="interaction">
    <interactant intactId="EBI-127642">
        <id>Q9VLV5</id>
    </interactant>
    <interactant intactId="EBI-88876">
        <id>Q9VJI7</id>
        <label>LSm7</label>
    </interactant>
    <organismsDiffer>false</organismsDiffer>
    <experiments>3</experiments>
</comment>
<comment type="interaction">
    <interactant intactId="EBI-127642">
        <id>Q9VLV5</id>
    </interactant>
    <interactant intactId="EBI-153111">
        <id>Q24297</id>
        <label>SmF</label>
    </interactant>
    <organismsDiffer>false</organismsDiffer>
    <experiments>5</experiments>
</comment>
<comment type="subcellular location">
    <subcellularLocation>
        <location evidence="1">Nucleus</location>
    </subcellularLocation>
    <subcellularLocation>
        <location evidence="1">Cytoplasm</location>
        <location evidence="1">Cytosol</location>
    </subcellularLocation>
</comment>
<comment type="similarity">
    <text evidence="4">Belongs to the snRNP Sm proteins family.</text>
</comment>
<keyword id="KW-0963">Cytoplasm</keyword>
<keyword id="KW-0507">mRNA processing</keyword>
<keyword id="KW-0508">mRNA splicing</keyword>
<keyword id="KW-0539">Nucleus</keyword>
<keyword id="KW-1185">Reference proteome</keyword>
<keyword id="KW-0687">Ribonucleoprotein</keyword>
<keyword id="KW-0694">RNA-binding</keyword>
<keyword id="KW-0747">Spliceosome</keyword>
<feature type="chain" id="PRO_0000125534" description="Probable small nuclear ribonucleoprotein E">
    <location>
        <begin position="1"/>
        <end position="94"/>
    </location>
</feature>
<feature type="domain" description="Sm" evidence="2">
    <location>
        <begin position="17"/>
        <end position="92"/>
    </location>
</feature>
<sequence>MSFKGNPKVQKVMVQPINLIFRYLQNRSRVQVWLYENISLRIEGHIVGFDEYMNLVLDDAEEVYVKTRQRRNLGRIMLKGDNITLIQNVSPTKD</sequence>
<protein>
    <recommendedName>
        <fullName>Probable small nuclear ribonucleoprotein E</fullName>
        <shortName>snRNP-E</shortName>
    </recommendedName>
    <alternativeName>
        <fullName>Sm protein E</fullName>
        <shortName>Sm-E</shortName>
        <shortName>SmE</shortName>
    </alternativeName>
</protein>
<name>RUXE_DROME</name>
<gene>
    <name type="primary">SmE</name>
    <name type="ORF">CG18591</name>
</gene>
<reference evidence="4" key="1">
    <citation type="journal article" date="2000" name="Science">
        <title>The genome sequence of Drosophila melanogaster.</title>
        <authorList>
            <person name="Adams M.D."/>
            <person name="Celniker S.E."/>
            <person name="Holt R.A."/>
            <person name="Evans C.A."/>
            <person name="Gocayne J.D."/>
            <person name="Amanatides P.G."/>
            <person name="Scherer S.E."/>
            <person name="Li P.W."/>
            <person name="Hoskins R.A."/>
            <person name="Galle R.F."/>
            <person name="George R.A."/>
            <person name="Lewis S.E."/>
            <person name="Richards S."/>
            <person name="Ashburner M."/>
            <person name="Henderson S.N."/>
            <person name="Sutton G.G."/>
            <person name="Wortman J.R."/>
            <person name="Yandell M.D."/>
            <person name="Zhang Q."/>
            <person name="Chen L.X."/>
            <person name="Brandon R.C."/>
            <person name="Rogers Y.-H.C."/>
            <person name="Blazej R.G."/>
            <person name="Champe M."/>
            <person name="Pfeiffer B.D."/>
            <person name="Wan K.H."/>
            <person name="Doyle C."/>
            <person name="Baxter E.G."/>
            <person name="Helt G."/>
            <person name="Nelson C.R."/>
            <person name="Miklos G.L.G."/>
            <person name="Abril J.F."/>
            <person name="Agbayani A."/>
            <person name="An H.-J."/>
            <person name="Andrews-Pfannkoch C."/>
            <person name="Baldwin D."/>
            <person name="Ballew R.M."/>
            <person name="Basu A."/>
            <person name="Baxendale J."/>
            <person name="Bayraktaroglu L."/>
            <person name="Beasley E.M."/>
            <person name="Beeson K.Y."/>
            <person name="Benos P.V."/>
            <person name="Berman B.P."/>
            <person name="Bhandari D."/>
            <person name="Bolshakov S."/>
            <person name="Borkova D."/>
            <person name="Botchan M.R."/>
            <person name="Bouck J."/>
            <person name="Brokstein P."/>
            <person name="Brottier P."/>
            <person name="Burtis K.C."/>
            <person name="Busam D.A."/>
            <person name="Butler H."/>
            <person name="Cadieu E."/>
            <person name="Center A."/>
            <person name="Chandra I."/>
            <person name="Cherry J.M."/>
            <person name="Cawley S."/>
            <person name="Dahlke C."/>
            <person name="Davenport L.B."/>
            <person name="Davies P."/>
            <person name="de Pablos B."/>
            <person name="Delcher A."/>
            <person name="Deng Z."/>
            <person name="Mays A.D."/>
            <person name="Dew I."/>
            <person name="Dietz S.M."/>
            <person name="Dodson K."/>
            <person name="Doup L.E."/>
            <person name="Downes M."/>
            <person name="Dugan-Rocha S."/>
            <person name="Dunkov B.C."/>
            <person name="Dunn P."/>
            <person name="Durbin K.J."/>
            <person name="Evangelista C.C."/>
            <person name="Ferraz C."/>
            <person name="Ferriera S."/>
            <person name="Fleischmann W."/>
            <person name="Fosler C."/>
            <person name="Gabrielian A.E."/>
            <person name="Garg N.S."/>
            <person name="Gelbart W.M."/>
            <person name="Glasser K."/>
            <person name="Glodek A."/>
            <person name="Gong F."/>
            <person name="Gorrell J.H."/>
            <person name="Gu Z."/>
            <person name="Guan P."/>
            <person name="Harris M."/>
            <person name="Harris N.L."/>
            <person name="Harvey D.A."/>
            <person name="Heiman T.J."/>
            <person name="Hernandez J.R."/>
            <person name="Houck J."/>
            <person name="Hostin D."/>
            <person name="Houston K.A."/>
            <person name="Howland T.J."/>
            <person name="Wei M.-H."/>
            <person name="Ibegwam C."/>
            <person name="Jalali M."/>
            <person name="Kalush F."/>
            <person name="Karpen G.H."/>
            <person name="Ke Z."/>
            <person name="Kennison J.A."/>
            <person name="Ketchum K.A."/>
            <person name="Kimmel B.E."/>
            <person name="Kodira C.D."/>
            <person name="Kraft C.L."/>
            <person name="Kravitz S."/>
            <person name="Kulp D."/>
            <person name="Lai Z."/>
            <person name="Lasko P."/>
            <person name="Lei Y."/>
            <person name="Levitsky A.A."/>
            <person name="Li J.H."/>
            <person name="Li Z."/>
            <person name="Liang Y."/>
            <person name="Lin X."/>
            <person name="Liu X."/>
            <person name="Mattei B."/>
            <person name="McIntosh T.C."/>
            <person name="McLeod M.P."/>
            <person name="McPherson D."/>
            <person name="Merkulov G."/>
            <person name="Milshina N.V."/>
            <person name="Mobarry C."/>
            <person name="Morris J."/>
            <person name="Moshrefi A."/>
            <person name="Mount S.M."/>
            <person name="Moy M."/>
            <person name="Murphy B."/>
            <person name="Murphy L."/>
            <person name="Muzny D.M."/>
            <person name="Nelson D.L."/>
            <person name="Nelson D.R."/>
            <person name="Nelson K.A."/>
            <person name="Nixon K."/>
            <person name="Nusskern D.R."/>
            <person name="Pacleb J.M."/>
            <person name="Palazzolo M."/>
            <person name="Pittman G.S."/>
            <person name="Pan S."/>
            <person name="Pollard J."/>
            <person name="Puri V."/>
            <person name="Reese M.G."/>
            <person name="Reinert K."/>
            <person name="Remington K."/>
            <person name="Saunders R.D.C."/>
            <person name="Scheeler F."/>
            <person name="Shen H."/>
            <person name="Shue B.C."/>
            <person name="Siden-Kiamos I."/>
            <person name="Simpson M."/>
            <person name="Skupski M.P."/>
            <person name="Smith T.J."/>
            <person name="Spier E."/>
            <person name="Spradling A.C."/>
            <person name="Stapleton M."/>
            <person name="Strong R."/>
            <person name="Sun E."/>
            <person name="Svirskas R."/>
            <person name="Tector C."/>
            <person name="Turner R."/>
            <person name="Venter E."/>
            <person name="Wang A.H."/>
            <person name="Wang X."/>
            <person name="Wang Z.-Y."/>
            <person name="Wassarman D.A."/>
            <person name="Weinstock G.M."/>
            <person name="Weissenbach J."/>
            <person name="Williams S.M."/>
            <person name="Woodage T."/>
            <person name="Worley K.C."/>
            <person name="Wu D."/>
            <person name="Yang S."/>
            <person name="Yao Q.A."/>
            <person name="Ye J."/>
            <person name="Yeh R.-F."/>
            <person name="Zaveri J.S."/>
            <person name="Zhan M."/>
            <person name="Zhang G."/>
            <person name="Zhao Q."/>
            <person name="Zheng L."/>
            <person name="Zheng X.H."/>
            <person name="Zhong F.N."/>
            <person name="Zhong W."/>
            <person name="Zhou X."/>
            <person name="Zhu S.C."/>
            <person name="Zhu X."/>
            <person name="Smith H.O."/>
            <person name="Gibbs R.A."/>
            <person name="Myers E.W."/>
            <person name="Rubin G.M."/>
            <person name="Venter J.C."/>
        </authorList>
    </citation>
    <scope>NUCLEOTIDE SEQUENCE [LARGE SCALE GENOMIC DNA]</scope>
    <source>
        <strain>Berkeley</strain>
    </source>
</reference>
<reference key="2">
    <citation type="journal article" date="2002" name="Genome Biol.">
        <title>Annotation of the Drosophila melanogaster euchromatic genome: a systematic review.</title>
        <authorList>
            <person name="Misra S."/>
            <person name="Crosby M.A."/>
            <person name="Mungall C.J."/>
            <person name="Matthews B.B."/>
            <person name="Campbell K.S."/>
            <person name="Hradecky P."/>
            <person name="Huang Y."/>
            <person name="Kaminker J.S."/>
            <person name="Millburn G.H."/>
            <person name="Prochnik S.E."/>
            <person name="Smith C.D."/>
            <person name="Tupy J.L."/>
            <person name="Whitfield E.J."/>
            <person name="Bayraktaroglu L."/>
            <person name="Berman B.P."/>
            <person name="Bettencourt B.R."/>
            <person name="Celniker S.E."/>
            <person name="de Grey A.D.N.J."/>
            <person name="Drysdale R.A."/>
            <person name="Harris N.L."/>
            <person name="Richter J."/>
            <person name="Russo S."/>
            <person name="Schroeder A.J."/>
            <person name="Shu S.Q."/>
            <person name="Stapleton M."/>
            <person name="Yamada C."/>
            <person name="Ashburner M."/>
            <person name="Gelbart W.M."/>
            <person name="Rubin G.M."/>
            <person name="Lewis S.E."/>
        </authorList>
    </citation>
    <scope>GENOME REANNOTATION</scope>
    <source>
        <strain>Berkeley</strain>
    </source>
</reference>
<reference key="3">
    <citation type="submission" date="2003-02" db="EMBL/GenBank/DDBJ databases">
        <authorList>
            <person name="Stapleton M."/>
            <person name="Brokstein P."/>
            <person name="Hong L."/>
            <person name="Agbayani A."/>
            <person name="Carlson J.W."/>
            <person name="Champe M."/>
            <person name="Chavez C."/>
            <person name="Dorsett V."/>
            <person name="Dresnek D."/>
            <person name="Farfan D."/>
            <person name="Frise E."/>
            <person name="George R.A."/>
            <person name="Gonzalez M."/>
            <person name="Guarin H."/>
            <person name="Kronmiller B."/>
            <person name="Li P.W."/>
            <person name="Liao G."/>
            <person name="Miranda A."/>
            <person name="Mungall C.J."/>
            <person name="Nunoo J."/>
            <person name="Pacleb J.M."/>
            <person name="Paragas V."/>
            <person name="Park S."/>
            <person name="Patel S."/>
            <person name="Phouanenavong S."/>
            <person name="Wan K.H."/>
            <person name="Yu C."/>
            <person name="Lewis S.E."/>
            <person name="Rubin G.M."/>
            <person name="Celniker S.E."/>
        </authorList>
    </citation>
    <scope>NUCLEOTIDE SEQUENCE [LARGE SCALE MRNA]</scope>
    <source>
        <strain>Berkeley</strain>
        <tissue>Ovary</tissue>
    </source>
</reference>
<reference key="4">
    <citation type="journal article" date="2008" name="Proc. Natl. Acad. Sci. U.S.A.">
        <title>Evolution of an RNP assembly system: a minimal SMN complex facilitates formation of UsnRNPs in Drosophila melanogaster.</title>
        <authorList>
            <person name="Kroiss M."/>
            <person name="Schultz J."/>
            <person name="Wiesner J."/>
            <person name="Chari A."/>
            <person name="Sickmann A."/>
            <person name="Fischer U."/>
        </authorList>
    </citation>
    <scope>INTERACTION WITH THE SMN COMPLEX</scope>
</reference>
<accession>Q9VLV5</accession>
<proteinExistence type="evidence at protein level"/>